<sequence>MDADNSTLPTEQSAVRETCDRDVTMSPRKRRRLSVSLEPELTEPEAAGTPGERCSTADTPESTASEPRSLFNSTPTEGNIAPFLTKHIKDQHASRNRFAPIDSSLPRRKADSKYCYRHRPDLKCRRQAVEPTVDQMQRDLSTLSQNDQQSIAHFWSLFSAAPSKHRNLMLQGIVAQCCFPQLSFLSASVRDLIRIDFVTALPPEISFKILSYLDTASLCSAAQVSHSWRALADDDVVWHRMCEQHIDRKCEKCGWGLPMLDRKRLKDTKRQVQLRAAGKEIAPNQRPQQQHRPWKAVYMDRFKVGTNWKYGRCTTTIFRGHTNGVMCLQFDDNILATGSYDATIKIWDIETGKEIRTLRGHESTIRCLQFDDTKLISGSLDRTIKVWNWRSGECISTYTGHQGGVLCLHFDSTTLASGSKDNTIKIWNFHDKSTRILRGHADWVNSVKLDTASRTVFSASDDLTVRIWDLDTGKCIHSYAGHVGQVQQVLPLPREFEFKHQSNCADDRSDRLSGSESPDHRGSHGYRSNNAPDQQPNTSAPPTEPMSPLFEALFTEDQGRPAPPRYMLTAALDLTLRLWEVHTGRCLRTFFGHIEGVWGLAADTLRFVSGAQDHMAKVWDPRTGTCERTFTGHRGPVTCVSLSDSRMATGSEDSEVRMYSFKA</sequence>
<gene>
    <name type="primary">sconB</name>
    <name type="ORF">ARB_04727</name>
</gene>
<accession>D4AM37</accession>
<keyword id="KW-1185">Reference proteome</keyword>
<keyword id="KW-0677">Repeat</keyword>
<keyword id="KW-0804">Transcription</keyword>
<keyword id="KW-0805">Transcription regulation</keyword>
<keyword id="KW-0833">Ubl conjugation pathway</keyword>
<keyword id="KW-0853">WD repeat</keyword>
<reference key="1">
    <citation type="journal article" date="2011" name="Genome Biol.">
        <title>Comparative and functional genomics provide insights into the pathogenicity of dermatophytic fungi.</title>
        <authorList>
            <person name="Burmester A."/>
            <person name="Shelest E."/>
            <person name="Gloeckner G."/>
            <person name="Heddergott C."/>
            <person name="Schindler S."/>
            <person name="Staib P."/>
            <person name="Heidel A."/>
            <person name="Felder M."/>
            <person name="Petzold A."/>
            <person name="Szafranski K."/>
            <person name="Feuermann M."/>
            <person name="Pedruzzi I."/>
            <person name="Priebe S."/>
            <person name="Groth M."/>
            <person name="Winkler R."/>
            <person name="Li W."/>
            <person name="Kniemeyer O."/>
            <person name="Schroeckh V."/>
            <person name="Hertweck C."/>
            <person name="Hube B."/>
            <person name="White T.C."/>
            <person name="Platzer M."/>
            <person name="Guthke R."/>
            <person name="Heitman J."/>
            <person name="Woestemeyer J."/>
            <person name="Zipfel P.F."/>
            <person name="Monod M."/>
            <person name="Brakhage A.A."/>
        </authorList>
    </citation>
    <scope>NUCLEOTIDE SEQUENCE [LARGE SCALE GENOMIC DNA]</scope>
    <source>
        <strain>ATCC MYA-4681 / CBS 112371</strain>
    </source>
</reference>
<name>SCONB_ARTBC</name>
<dbReference type="EMBL" id="ABSU01000002">
    <property type="protein sequence ID" value="EFE35793.1"/>
    <property type="molecule type" value="Genomic_DNA"/>
</dbReference>
<dbReference type="RefSeq" id="XP_003016438.1">
    <property type="nucleotide sequence ID" value="XM_003016392.1"/>
</dbReference>
<dbReference type="SMR" id="D4AM37"/>
<dbReference type="STRING" id="663331.D4AM37"/>
<dbReference type="GeneID" id="9521921"/>
<dbReference type="KEGG" id="abe:ARB_04727"/>
<dbReference type="eggNOG" id="KOG0274">
    <property type="taxonomic scope" value="Eukaryota"/>
</dbReference>
<dbReference type="HOGENOM" id="CLU_000288_103_1_1"/>
<dbReference type="OMA" id="GIAHVWS"/>
<dbReference type="OrthoDB" id="5580488at2759"/>
<dbReference type="UniPathway" id="UPA00143"/>
<dbReference type="Proteomes" id="UP000008866">
    <property type="component" value="Unassembled WGS sequence"/>
</dbReference>
<dbReference type="GO" id="GO:0016567">
    <property type="term" value="P:protein ubiquitination"/>
    <property type="evidence" value="ECO:0007669"/>
    <property type="project" value="UniProtKB-UniPathway"/>
</dbReference>
<dbReference type="CDD" id="cd22147">
    <property type="entry name" value="F-box_SpPof1-like"/>
    <property type="match status" value="1"/>
</dbReference>
<dbReference type="CDD" id="cd00200">
    <property type="entry name" value="WD40"/>
    <property type="match status" value="1"/>
</dbReference>
<dbReference type="FunFam" id="1.20.1280.50:FF:000016">
    <property type="entry name" value="E3 ubiquitin ligase complex SCF subunit sconB"/>
    <property type="match status" value="1"/>
</dbReference>
<dbReference type="FunFam" id="2.130.10.10:FF:000715">
    <property type="entry name" value="F-box protein MET30"/>
    <property type="match status" value="1"/>
</dbReference>
<dbReference type="Gene3D" id="1.20.1280.50">
    <property type="match status" value="1"/>
</dbReference>
<dbReference type="Gene3D" id="2.130.10.10">
    <property type="entry name" value="YVTN repeat-like/Quinoprotein amine dehydrogenase"/>
    <property type="match status" value="3"/>
</dbReference>
<dbReference type="InterPro" id="IPR036047">
    <property type="entry name" value="F-box-like_dom_sf"/>
</dbReference>
<dbReference type="InterPro" id="IPR001810">
    <property type="entry name" value="F-box_dom"/>
</dbReference>
<dbReference type="InterPro" id="IPR020472">
    <property type="entry name" value="G-protein_beta_WD-40_rep"/>
</dbReference>
<dbReference type="InterPro" id="IPR011047">
    <property type="entry name" value="Quinoprotein_ADH-like_sf"/>
</dbReference>
<dbReference type="InterPro" id="IPR051075">
    <property type="entry name" value="SCF_subunit_WD-repeat"/>
</dbReference>
<dbReference type="InterPro" id="IPR015943">
    <property type="entry name" value="WD40/YVTN_repeat-like_dom_sf"/>
</dbReference>
<dbReference type="InterPro" id="IPR019775">
    <property type="entry name" value="WD40_repeat_CS"/>
</dbReference>
<dbReference type="InterPro" id="IPR001680">
    <property type="entry name" value="WD40_rpt"/>
</dbReference>
<dbReference type="PANTHER" id="PTHR19872">
    <property type="entry name" value="UBIQUITIN LIGASE SPECIFICITY FACTOR/HREP PROTEIN"/>
    <property type="match status" value="1"/>
</dbReference>
<dbReference type="PANTHER" id="PTHR19872:SF9">
    <property type="entry name" value="UBIQUITIN-BINDING SDF UBIQUITIN LIGASE COMPLEX SUBUNIT"/>
    <property type="match status" value="1"/>
</dbReference>
<dbReference type="Pfam" id="PF12937">
    <property type="entry name" value="F-box-like"/>
    <property type="match status" value="1"/>
</dbReference>
<dbReference type="Pfam" id="PF00400">
    <property type="entry name" value="WD40"/>
    <property type="match status" value="6"/>
</dbReference>
<dbReference type="PRINTS" id="PR00320">
    <property type="entry name" value="GPROTEINBRPT"/>
</dbReference>
<dbReference type="SMART" id="SM00256">
    <property type="entry name" value="FBOX"/>
    <property type="match status" value="1"/>
</dbReference>
<dbReference type="SMART" id="SM00320">
    <property type="entry name" value="WD40"/>
    <property type="match status" value="7"/>
</dbReference>
<dbReference type="SUPFAM" id="SSF81383">
    <property type="entry name" value="F-box domain"/>
    <property type="match status" value="1"/>
</dbReference>
<dbReference type="SUPFAM" id="SSF50998">
    <property type="entry name" value="Quinoprotein alcohol dehydrogenase-like"/>
    <property type="match status" value="1"/>
</dbReference>
<dbReference type="PROSITE" id="PS50181">
    <property type="entry name" value="FBOX"/>
    <property type="match status" value="1"/>
</dbReference>
<dbReference type="PROSITE" id="PS00678">
    <property type="entry name" value="WD_REPEATS_1"/>
    <property type="match status" value="4"/>
</dbReference>
<dbReference type="PROSITE" id="PS50082">
    <property type="entry name" value="WD_REPEATS_2"/>
    <property type="match status" value="7"/>
</dbReference>
<dbReference type="PROSITE" id="PS50294">
    <property type="entry name" value="WD_REPEATS_REGION"/>
    <property type="match status" value="1"/>
</dbReference>
<protein>
    <recommendedName>
        <fullName>Probable E3 ubiquitin ligase complex SCF subunit sconB</fullName>
    </recommendedName>
    <alternativeName>
        <fullName>Sulfur controller B</fullName>
    </alternativeName>
    <alternativeName>
        <fullName>Sulfur metabolite repression control protein B</fullName>
    </alternativeName>
</protein>
<organism>
    <name type="scientific">Arthroderma benhamiae (strain ATCC MYA-4681 / CBS 112371)</name>
    <name type="common">Trichophyton mentagrophytes</name>
    <dbReference type="NCBI Taxonomy" id="663331"/>
    <lineage>
        <taxon>Eukaryota</taxon>
        <taxon>Fungi</taxon>
        <taxon>Dikarya</taxon>
        <taxon>Ascomycota</taxon>
        <taxon>Pezizomycotina</taxon>
        <taxon>Eurotiomycetes</taxon>
        <taxon>Eurotiomycetidae</taxon>
        <taxon>Onygenales</taxon>
        <taxon>Arthrodermataceae</taxon>
        <taxon>Trichophyton</taxon>
    </lineage>
</organism>
<proteinExistence type="inferred from homology"/>
<evidence type="ECO:0000250" key="1"/>
<evidence type="ECO:0000255" key="2">
    <source>
        <dbReference type="PROSITE-ProRule" id="PRU00080"/>
    </source>
</evidence>
<evidence type="ECO:0000256" key="3">
    <source>
        <dbReference type="SAM" id="MobiDB-lite"/>
    </source>
</evidence>
<evidence type="ECO:0000305" key="4"/>
<comment type="function">
    <text evidence="1">Component of the SCF(sconB) E3 ubiquitin ligase complex involved in the regulation of sulfur metabolite repression, probably by mediating the inactivation or degradation of the metR transcription factor.</text>
</comment>
<comment type="pathway">
    <text>Protein modification; protein ubiquitination.</text>
</comment>
<comment type="subunit">
    <text evidence="1">Component of the SCF(sconB) E3 ubiquitin ligase complex.</text>
</comment>
<comment type="similarity">
    <text evidence="4">Belongs to the WD repeat MET30/SCONB/SCON-2 family.</text>
</comment>
<feature type="chain" id="PRO_0000397244" description="Probable E3 ubiquitin ligase complex SCF subunit sconB">
    <location>
        <begin position="1"/>
        <end position="663"/>
    </location>
</feature>
<feature type="domain" description="F-box" evidence="2">
    <location>
        <begin position="195"/>
        <end position="241"/>
    </location>
</feature>
<feature type="repeat" description="WD 1">
    <location>
        <begin position="320"/>
        <end position="359"/>
    </location>
</feature>
<feature type="repeat" description="WD 2">
    <location>
        <begin position="361"/>
        <end position="399"/>
    </location>
</feature>
<feature type="repeat" description="WD 3">
    <location>
        <begin position="400"/>
        <end position="437"/>
    </location>
</feature>
<feature type="repeat" description="WD 4">
    <location>
        <begin position="439"/>
        <end position="480"/>
    </location>
</feature>
<feature type="repeat" description="WD 5">
    <location>
        <begin position="544"/>
        <end position="589"/>
    </location>
</feature>
<feature type="repeat" description="WD 6">
    <location>
        <begin position="592"/>
        <end position="629"/>
    </location>
</feature>
<feature type="repeat" description="WD 7">
    <location>
        <begin position="632"/>
        <end position="663"/>
    </location>
</feature>
<feature type="region of interest" description="Disordered" evidence="3">
    <location>
        <begin position="1"/>
        <end position="80"/>
    </location>
</feature>
<feature type="region of interest" description="Disordered" evidence="3">
    <location>
        <begin position="503"/>
        <end position="547"/>
    </location>
</feature>
<feature type="compositionally biased region" description="Polar residues" evidence="3">
    <location>
        <begin position="1"/>
        <end position="15"/>
    </location>
</feature>
<feature type="compositionally biased region" description="Polar residues" evidence="3">
    <location>
        <begin position="56"/>
        <end position="77"/>
    </location>
</feature>
<feature type="compositionally biased region" description="Basic and acidic residues" evidence="3">
    <location>
        <begin position="503"/>
        <end position="522"/>
    </location>
</feature>
<feature type="compositionally biased region" description="Polar residues" evidence="3">
    <location>
        <begin position="526"/>
        <end position="541"/>
    </location>
</feature>